<comment type="function">
    <text evidence="1">Catalyzes the NADPH-dependent reduction of L-glutamate 5-phosphate into L-glutamate 5-semialdehyde and phosphate. The product spontaneously undergoes cyclization to form 1-pyrroline-5-carboxylate.</text>
</comment>
<comment type="catalytic activity">
    <reaction evidence="1">
        <text>L-glutamate 5-semialdehyde + phosphate + NADP(+) = L-glutamyl 5-phosphate + NADPH + H(+)</text>
        <dbReference type="Rhea" id="RHEA:19541"/>
        <dbReference type="ChEBI" id="CHEBI:15378"/>
        <dbReference type="ChEBI" id="CHEBI:43474"/>
        <dbReference type="ChEBI" id="CHEBI:57783"/>
        <dbReference type="ChEBI" id="CHEBI:58066"/>
        <dbReference type="ChEBI" id="CHEBI:58274"/>
        <dbReference type="ChEBI" id="CHEBI:58349"/>
        <dbReference type="EC" id="1.2.1.41"/>
    </reaction>
</comment>
<comment type="pathway">
    <text evidence="1">Amino-acid biosynthesis; L-proline biosynthesis; L-glutamate 5-semialdehyde from L-glutamate: step 2/2.</text>
</comment>
<comment type="subcellular location">
    <subcellularLocation>
        <location evidence="1">Cytoplasm</location>
    </subcellularLocation>
</comment>
<comment type="similarity">
    <text evidence="1">Belongs to the gamma-glutamyl phosphate reductase family.</text>
</comment>
<evidence type="ECO:0000255" key="1">
    <source>
        <dbReference type="HAMAP-Rule" id="MF_00412"/>
    </source>
</evidence>
<gene>
    <name evidence="1" type="primary">proA</name>
    <name type="ordered locus">SG0601</name>
</gene>
<feature type="chain" id="PRO_0000252593" description="Gamma-glutamyl phosphate reductase">
    <location>
        <begin position="1"/>
        <end position="417"/>
    </location>
</feature>
<reference key="1">
    <citation type="journal article" date="2006" name="Genome Res.">
        <title>Massive genome erosion and functional adaptations provide insights into the symbiotic lifestyle of Sodalis glossinidius in the tsetse host.</title>
        <authorList>
            <person name="Toh H."/>
            <person name="Weiss B.L."/>
            <person name="Perkin S.A.H."/>
            <person name="Yamashita A."/>
            <person name="Oshima K."/>
            <person name="Hattori M."/>
            <person name="Aksoy S."/>
        </authorList>
    </citation>
    <scope>NUCLEOTIDE SEQUENCE [LARGE SCALE GENOMIC DNA]</scope>
    <source>
        <strain>morsitans</strain>
    </source>
</reference>
<sequence>MLEQMGKAAKAASWQLAVLTSAQKDSALQVIADSLEANSQSILDANAQDMAEARRNGLVDALLDRLLLNPARLSAIAADVRQVCRLTDPVGQVIDGQRLDSGLSLERRRVPLGVVGVIYEARPNVTVDVAALCLKTGNAVILRGGKETYRTNAATVKVIQQALTDCGLPACAVQAIEDPDRALVNALLRLDRYVDMLIPRGGAGLHKLCREQSTIPVITGGIGVCHIYVDDTIDFEQALPVIENAKIQRPSACNSLETLLVHQAIAERFLPRLSHHMHTLGVTLHADDNARPYLADGPATCVAVTEADYHDEWLSRDLNVKLMDGFEQAVAHIRHYGTQHSDAILTRSIQAADRFVREVDSSVVYVNASTRFTDGGQFGLGAEVAVSTQKLHARGPMGLEALTTYKWIGYGDNLSRP</sequence>
<proteinExistence type="inferred from homology"/>
<dbReference type="EC" id="1.2.1.41" evidence="1"/>
<dbReference type="EMBL" id="AP008232">
    <property type="protein sequence ID" value="BAE73876.1"/>
    <property type="molecule type" value="Genomic_DNA"/>
</dbReference>
<dbReference type="RefSeq" id="WP_011410354.1">
    <property type="nucleotide sequence ID" value="NC_007712.1"/>
</dbReference>
<dbReference type="SMR" id="Q2NVE9"/>
<dbReference type="STRING" id="343509.SG0601"/>
<dbReference type="KEGG" id="sgl:SG0601"/>
<dbReference type="eggNOG" id="COG0014">
    <property type="taxonomic scope" value="Bacteria"/>
</dbReference>
<dbReference type="HOGENOM" id="CLU_030231_0_0_6"/>
<dbReference type="OrthoDB" id="9809970at2"/>
<dbReference type="BioCyc" id="SGLO343509:SGP1_RS05160-MONOMER"/>
<dbReference type="UniPathway" id="UPA00098">
    <property type="reaction ID" value="UER00360"/>
</dbReference>
<dbReference type="Proteomes" id="UP000001932">
    <property type="component" value="Chromosome"/>
</dbReference>
<dbReference type="GO" id="GO:0005737">
    <property type="term" value="C:cytoplasm"/>
    <property type="evidence" value="ECO:0007669"/>
    <property type="project" value="UniProtKB-SubCell"/>
</dbReference>
<dbReference type="GO" id="GO:0004350">
    <property type="term" value="F:glutamate-5-semialdehyde dehydrogenase activity"/>
    <property type="evidence" value="ECO:0007669"/>
    <property type="project" value="UniProtKB-UniRule"/>
</dbReference>
<dbReference type="GO" id="GO:0050661">
    <property type="term" value="F:NADP binding"/>
    <property type="evidence" value="ECO:0007669"/>
    <property type="project" value="InterPro"/>
</dbReference>
<dbReference type="GO" id="GO:0055129">
    <property type="term" value="P:L-proline biosynthetic process"/>
    <property type="evidence" value="ECO:0007669"/>
    <property type="project" value="UniProtKB-UniRule"/>
</dbReference>
<dbReference type="CDD" id="cd07079">
    <property type="entry name" value="ALDH_F18-19_ProA-GPR"/>
    <property type="match status" value="1"/>
</dbReference>
<dbReference type="FunFam" id="3.40.309.10:FF:000006">
    <property type="entry name" value="Gamma-glutamyl phosphate reductase"/>
    <property type="match status" value="1"/>
</dbReference>
<dbReference type="Gene3D" id="3.40.605.10">
    <property type="entry name" value="Aldehyde Dehydrogenase, Chain A, domain 1"/>
    <property type="match status" value="1"/>
</dbReference>
<dbReference type="Gene3D" id="3.40.309.10">
    <property type="entry name" value="Aldehyde Dehydrogenase, Chain A, domain 2"/>
    <property type="match status" value="1"/>
</dbReference>
<dbReference type="HAMAP" id="MF_00412">
    <property type="entry name" value="ProA"/>
    <property type="match status" value="1"/>
</dbReference>
<dbReference type="InterPro" id="IPR016161">
    <property type="entry name" value="Ald_DH/histidinol_DH"/>
</dbReference>
<dbReference type="InterPro" id="IPR016163">
    <property type="entry name" value="Ald_DH_C"/>
</dbReference>
<dbReference type="InterPro" id="IPR016162">
    <property type="entry name" value="Ald_DH_N"/>
</dbReference>
<dbReference type="InterPro" id="IPR015590">
    <property type="entry name" value="Aldehyde_DH_dom"/>
</dbReference>
<dbReference type="InterPro" id="IPR012134">
    <property type="entry name" value="Glu-5-SA_DH"/>
</dbReference>
<dbReference type="InterPro" id="IPR000965">
    <property type="entry name" value="GPR_dom"/>
</dbReference>
<dbReference type="NCBIfam" id="NF001221">
    <property type="entry name" value="PRK00197.1"/>
    <property type="match status" value="1"/>
</dbReference>
<dbReference type="NCBIfam" id="TIGR00407">
    <property type="entry name" value="proA"/>
    <property type="match status" value="1"/>
</dbReference>
<dbReference type="PANTHER" id="PTHR11063:SF8">
    <property type="entry name" value="DELTA-1-PYRROLINE-5-CARBOXYLATE SYNTHASE"/>
    <property type="match status" value="1"/>
</dbReference>
<dbReference type="PANTHER" id="PTHR11063">
    <property type="entry name" value="GLUTAMATE SEMIALDEHYDE DEHYDROGENASE"/>
    <property type="match status" value="1"/>
</dbReference>
<dbReference type="Pfam" id="PF00171">
    <property type="entry name" value="Aldedh"/>
    <property type="match status" value="1"/>
</dbReference>
<dbReference type="PIRSF" id="PIRSF000151">
    <property type="entry name" value="GPR"/>
    <property type="match status" value="1"/>
</dbReference>
<dbReference type="SUPFAM" id="SSF53720">
    <property type="entry name" value="ALDH-like"/>
    <property type="match status" value="1"/>
</dbReference>
<organism>
    <name type="scientific">Sodalis glossinidius (strain morsitans)</name>
    <dbReference type="NCBI Taxonomy" id="343509"/>
    <lineage>
        <taxon>Bacteria</taxon>
        <taxon>Pseudomonadati</taxon>
        <taxon>Pseudomonadota</taxon>
        <taxon>Gammaproteobacteria</taxon>
        <taxon>Enterobacterales</taxon>
        <taxon>Bruguierivoracaceae</taxon>
        <taxon>Sodalis</taxon>
    </lineage>
</organism>
<keyword id="KW-0028">Amino-acid biosynthesis</keyword>
<keyword id="KW-0963">Cytoplasm</keyword>
<keyword id="KW-0521">NADP</keyword>
<keyword id="KW-0560">Oxidoreductase</keyword>
<keyword id="KW-0641">Proline biosynthesis</keyword>
<accession>Q2NVE9</accession>
<protein>
    <recommendedName>
        <fullName evidence="1">Gamma-glutamyl phosphate reductase</fullName>
        <shortName evidence="1">GPR</shortName>
        <ecNumber evidence="1">1.2.1.41</ecNumber>
    </recommendedName>
    <alternativeName>
        <fullName evidence="1">Glutamate-5-semialdehyde dehydrogenase</fullName>
    </alternativeName>
    <alternativeName>
        <fullName evidence="1">Glutamyl-gamma-semialdehyde dehydrogenase</fullName>
        <shortName evidence="1">GSA dehydrogenase</shortName>
    </alternativeName>
</protein>
<name>PROA_SODGM</name>